<name>CY550_THAPS</name>
<evidence type="ECO:0000255" key="1">
    <source>
        <dbReference type="HAMAP-Rule" id="MF_01378"/>
    </source>
</evidence>
<evidence type="ECO:0000305" key="2"/>
<evidence type="ECO:0007829" key="3">
    <source>
        <dbReference type="PDB" id="8IWH"/>
    </source>
</evidence>
<proteinExistence type="evidence at protein level"/>
<organism>
    <name type="scientific">Thalassiosira pseudonana</name>
    <name type="common">Marine diatom</name>
    <name type="synonym">Cyclotella nana</name>
    <dbReference type="NCBI Taxonomy" id="35128"/>
    <lineage>
        <taxon>Eukaryota</taxon>
        <taxon>Sar</taxon>
        <taxon>Stramenopiles</taxon>
        <taxon>Ochrophyta</taxon>
        <taxon>Bacillariophyta</taxon>
        <taxon>Coscinodiscophyceae</taxon>
        <taxon>Thalassiosirophycidae</taxon>
        <taxon>Thalassiosirales</taxon>
        <taxon>Thalassiosiraceae</taxon>
        <taxon>Thalassiosira</taxon>
    </lineage>
</organism>
<comment type="function">
    <text evidence="1">One of the extrinsic, lumenal subunits of photosystem II (PSII). PSII is a light-driven water plastoquinone oxidoreductase, using light energy to abstract electrons from H(2)O, generating a proton gradient subsequently used for ATP formation. The extrinsic proteins stabilize the structure of photosystem II oxygen-evolving complex (OEC), the ion environment of oxygen evolution and protect the OEC against heat-induced inactivation.</text>
</comment>
<comment type="cofactor">
    <cofactor evidence="1">
        <name>heme c</name>
        <dbReference type="ChEBI" id="CHEBI:61717"/>
    </cofactor>
    <text evidence="1">Binds 1 heme c group covalently per subunit.</text>
</comment>
<comment type="subunit">
    <text evidence="2">PSII is composed of 1 copy each of membrane proteins PsbA, PsbB, PsbC, PsbD, PsbE, PsbF, PsbH, PsbI, PsbJ, PsbK, PsbL, PsbM, PsbT, PsbY, PsbZ, Psb30/Ycf12, at least 3 peripheral proteins of the oxygen-evolving complex and a large number of cofactors. It forms dimeric complexes.</text>
</comment>
<comment type="subcellular location">
    <subcellularLocation>
        <location evidence="1">Plastid</location>
        <location evidence="1">Chloroplast thylakoid membrane</location>
        <topology evidence="1">Peripheral membrane protein</topology>
        <orientation evidence="1">Lumenal side</orientation>
    </subcellularLocation>
    <text evidence="1">Associated with photosystem II at the lumenal side of the thylakoid membrane.</text>
</comment>
<comment type="similarity">
    <text evidence="1">Belongs to the cytochrome c family. PsbV subfamily.</text>
</comment>
<geneLocation type="chloroplast"/>
<protein>
    <recommendedName>
        <fullName evidence="1">Photosystem II extrinsic protein V</fullName>
        <shortName evidence="1">PsbV</shortName>
    </recommendedName>
    <alternativeName>
        <fullName evidence="1">Cytochrome c-550</fullName>
    </alternativeName>
    <alternativeName>
        <fullName evidence="1">Cytochrome c550</fullName>
    </alternativeName>
</protein>
<feature type="signal peptide" evidence="1">
    <location>
        <begin position="1"/>
        <end position="26"/>
    </location>
</feature>
<feature type="chain" id="PRO_0000295615" description="Photosystem II extrinsic protein V">
    <location>
        <begin position="27"/>
        <end position="163"/>
    </location>
</feature>
<feature type="binding site" description="covalent" evidence="1">
    <location>
        <position position="63"/>
    </location>
    <ligand>
        <name>heme c</name>
        <dbReference type="ChEBI" id="CHEBI:61717"/>
    </ligand>
</feature>
<feature type="binding site" description="covalent" evidence="1">
    <location>
        <position position="66"/>
    </location>
    <ligand>
        <name>heme c</name>
        <dbReference type="ChEBI" id="CHEBI:61717"/>
    </ligand>
</feature>
<feature type="binding site" description="axial binding residue" evidence="1">
    <location>
        <position position="67"/>
    </location>
    <ligand>
        <name>heme c</name>
        <dbReference type="ChEBI" id="CHEBI:61717"/>
    </ligand>
    <ligandPart>
        <name>Fe</name>
        <dbReference type="ChEBI" id="CHEBI:18248"/>
    </ligandPart>
</feature>
<feature type="binding site" description="axial binding residue" evidence="1">
    <location>
        <position position="130"/>
    </location>
    <ligand>
        <name>heme c</name>
        <dbReference type="ChEBI" id="CHEBI:61717"/>
    </ligand>
    <ligandPart>
        <name>Fe</name>
        <dbReference type="ChEBI" id="CHEBI:18248"/>
    </ligandPart>
</feature>
<feature type="strand" evidence="3">
    <location>
        <begin position="35"/>
        <end position="37"/>
    </location>
</feature>
<feature type="strand" evidence="3">
    <location>
        <begin position="39"/>
        <end position="41"/>
    </location>
</feature>
<feature type="strand" evidence="3">
    <location>
        <begin position="44"/>
        <end position="46"/>
    </location>
</feature>
<feature type="helix" evidence="3">
    <location>
        <begin position="49"/>
        <end position="62"/>
    </location>
</feature>
<feature type="helix" evidence="3">
    <location>
        <begin position="64"/>
        <end position="67"/>
    </location>
</feature>
<feature type="helix" evidence="3">
    <location>
        <begin position="68"/>
        <end position="70"/>
    </location>
</feature>
<feature type="helix" evidence="3">
    <location>
        <begin position="82"/>
        <end position="86"/>
    </location>
</feature>
<feature type="strand" evidence="3">
    <location>
        <begin position="88"/>
        <end position="90"/>
    </location>
</feature>
<feature type="helix" evidence="3">
    <location>
        <begin position="95"/>
        <end position="103"/>
    </location>
</feature>
<feature type="helix" evidence="3">
    <location>
        <begin position="115"/>
        <end position="117"/>
    </location>
</feature>
<feature type="turn" evidence="3">
    <location>
        <begin position="122"/>
        <end position="126"/>
    </location>
</feature>
<feature type="helix" evidence="3">
    <location>
        <begin position="128"/>
        <end position="130"/>
    </location>
</feature>
<feature type="helix" evidence="3">
    <location>
        <begin position="135"/>
        <end position="151"/>
    </location>
</feature>
<sequence>MFKTYSKSFACILFCIFNIFVVSASAIDLDEATRTVVTDSSGNTTVLTPEQVKRGKRLFNATCGACHTGGITKTNPNVGLDPEALSLATPRRDNISALVDYLKNPTTYDGLESIAEIHPSIKSADIYPRMRSLTDEDLYSIAGHIMLQPKIVAEKWGGGKIYF</sequence>
<keyword id="KW-0002">3D-structure</keyword>
<keyword id="KW-0150">Chloroplast</keyword>
<keyword id="KW-0249">Electron transport</keyword>
<keyword id="KW-0349">Heme</keyword>
<keyword id="KW-0408">Iron</keyword>
<keyword id="KW-0472">Membrane</keyword>
<keyword id="KW-0479">Metal-binding</keyword>
<keyword id="KW-0602">Photosynthesis</keyword>
<keyword id="KW-0604">Photosystem II</keyword>
<keyword id="KW-0934">Plastid</keyword>
<keyword id="KW-0732">Signal</keyword>
<keyword id="KW-0793">Thylakoid</keyword>
<keyword id="KW-0813">Transport</keyword>
<accession>A0T0N2</accession>
<dbReference type="EMBL" id="EF067921">
    <property type="protein sequence ID" value="ABK20717.1"/>
    <property type="molecule type" value="Genomic_DNA"/>
</dbReference>
<dbReference type="RefSeq" id="YP_874494.1">
    <property type="nucleotide sequence ID" value="NC_008589.1"/>
</dbReference>
<dbReference type="PDB" id="8IWH">
    <property type="method" value="EM"/>
    <property type="resolution" value="2.68 A"/>
    <property type="chains" value="V/v=1-162"/>
</dbReference>
<dbReference type="PDBsum" id="8IWH"/>
<dbReference type="EMDB" id="EMD-35766"/>
<dbReference type="SMR" id="A0T0N2"/>
<dbReference type="STRING" id="35128.A0T0N2"/>
<dbReference type="PaxDb" id="35128-Thapsdraft1039"/>
<dbReference type="GeneID" id="4524789"/>
<dbReference type="eggNOG" id="ENOG502RYSJ">
    <property type="taxonomic scope" value="Eukaryota"/>
</dbReference>
<dbReference type="InParanoid" id="A0T0N2"/>
<dbReference type="OMA" id="GTCHAGG"/>
<dbReference type="GO" id="GO:0009535">
    <property type="term" value="C:chloroplast thylakoid membrane"/>
    <property type="evidence" value="ECO:0007669"/>
    <property type="project" value="UniProtKB-SubCell"/>
</dbReference>
<dbReference type="GO" id="GO:0009523">
    <property type="term" value="C:photosystem II"/>
    <property type="evidence" value="ECO:0007669"/>
    <property type="project" value="UniProtKB-KW"/>
</dbReference>
<dbReference type="GO" id="GO:0009055">
    <property type="term" value="F:electron transfer activity"/>
    <property type="evidence" value="ECO:0007669"/>
    <property type="project" value="InterPro"/>
</dbReference>
<dbReference type="GO" id="GO:0020037">
    <property type="term" value="F:heme binding"/>
    <property type="evidence" value="ECO:0007669"/>
    <property type="project" value="InterPro"/>
</dbReference>
<dbReference type="GO" id="GO:0005506">
    <property type="term" value="F:iron ion binding"/>
    <property type="evidence" value="ECO:0007669"/>
    <property type="project" value="InterPro"/>
</dbReference>
<dbReference type="GO" id="GO:0019684">
    <property type="term" value="P:photosynthesis, light reaction"/>
    <property type="evidence" value="ECO:0007669"/>
    <property type="project" value="UniProtKB-UniRule"/>
</dbReference>
<dbReference type="GO" id="GO:0022904">
    <property type="term" value="P:respiratory electron transport chain"/>
    <property type="evidence" value="ECO:0007669"/>
    <property type="project" value="InterPro"/>
</dbReference>
<dbReference type="Gene3D" id="1.10.760.10">
    <property type="entry name" value="Cytochrome c-like domain"/>
    <property type="match status" value="1"/>
</dbReference>
<dbReference type="HAMAP" id="MF_01378">
    <property type="entry name" value="PSII_Cyt550"/>
    <property type="match status" value="1"/>
</dbReference>
<dbReference type="InterPro" id="IPR009056">
    <property type="entry name" value="Cyt_c-like_dom"/>
</dbReference>
<dbReference type="InterPro" id="IPR036909">
    <property type="entry name" value="Cyt_c-like_dom_sf"/>
</dbReference>
<dbReference type="InterPro" id="IPR029490">
    <property type="entry name" value="Cytochrom_C550"/>
</dbReference>
<dbReference type="InterPro" id="IPR017851">
    <property type="entry name" value="PsbV_cyt_c550"/>
</dbReference>
<dbReference type="InterPro" id="IPR016003">
    <property type="entry name" value="PsbV_cyt_c550-like"/>
</dbReference>
<dbReference type="NCBIfam" id="TIGR03045">
    <property type="entry name" value="PS_II_C550"/>
    <property type="match status" value="1"/>
</dbReference>
<dbReference type="Pfam" id="PF14495">
    <property type="entry name" value="Cytochrom_C550"/>
    <property type="match status" value="1"/>
</dbReference>
<dbReference type="PIRSF" id="PIRSF005890">
    <property type="entry name" value="Phot_II_cyt_c550"/>
    <property type="match status" value="1"/>
</dbReference>
<dbReference type="SUPFAM" id="SSF46626">
    <property type="entry name" value="Cytochrome c"/>
    <property type="match status" value="1"/>
</dbReference>
<dbReference type="PROSITE" id="PS51007">
    <property type="entry name" value="CYTC"/>
    <property type="match status" value="1"/>
</dbReference>
<gene>
    <name evidence="1" type="primary">psbV</name>
</gene>
<reference key="1">
    <citation type="journal article" date="2007" name="Mol. Genet. Genomics">
        <title>Chloroplast genomes of the diatoms Phaeodactylum tricornutum and Thalassiosira pseudonana: comparison with other plastid genomes of the red lineage.</title>
        <authorList>
            <person name="Oudot-Le Secq M.-P."/>
            <person name="Grimwood J."/>
            <person name="Shapiro H."/>
            <person name="Armbrust E.V."/>
            <person name="Bowler C."/>
            <person name="Green B.R."/>
        </authorList>
    </citation>
    <scope>NUCLEOTIDE SEQUENCE [LARGE SCALE GENOMIC DNA]</scope>
    <source>
        <strain>CCMP1335 / NEPCC58 / CCAP 1085/12</strain>
    </source>
</reference>